<dbReference type="EMBL" id="BT030573">
    <property type="protein sequence ID" value="ABQ13013.1"/>
    <property type="molecule type" value="mRNA"/>
</dbReference>
<dbReference type="EMBL" id="BC118242">
    <property type="protein sequence ID" value="AAI18243.1"/>
    <property type="molecule type" value="mRNA"/>
</dbReference>
<dbReference type="EMBL" id="K00833">
    <property type="protein sequence ID" value="AAA30708.1"/>
    <property type="molecule type" value="mRNA"/>
</dbReference>
<dbReference type="PIR" id="A00617">
    <property type="entry name" value="OKBO1R"/>
</dbReference>
<dbReference type="PIR" id="I45957">
    <property type="entry name" value="I45957"/>
</dbReference>
<dbReference type="RefSeq" id="NP_001069826.1">
    <property type="nucleotide sequence ID" value="NM_001076358.1"/>
</dbReference>
<dbReference type="RefSeq" id="XP_024836190.1">
    <property type="nucleotide sequence ID" value="XM_024980422.2"/>
</dbReference>
<dbReference type="PDB" id="1NE4">
    <property type="method" value="X-ray"/>
    <property type="resolution" value="2.40 A"/>
    <property type="chains" value="A=95-377"/>
</dbReference>
<dbReference type="PDB" id="1NE6">
    <property type="method" value="X-ray"/>
    <property type="resolution" value="2.30 A"/>
    <property type="chains" value="A=95-377"/>
</dbReference>
<dbReference type="PDB" id="1RGS">
    <property type="method" value="X-ray"/>
    <property type="resolution" value="2.80 A"/>
    <property type="chains" value="A=93-380"/>
</dbReference>
<dbReference type="PDB" id="1RL3">
    <property type="method" value="X-ray"/>
    <property type="resolution" value="2.70 A"/>
    <property type="chains" value="A/B=93-380"/>
</dbReference>
<dbReference type="PDB" id="2EZW">
    <property type="method" value="NMR"/>
    <property type="chains" value="A/B=13-62"/>
</dbReference>
<dbReference type="PDB" id="2QCS">
    <property type="method" value="X-ray"/>
    <property type="resolution" value="2.20 A"/>
    <property type="chains" value="B=91-380"/>
</dbReference>
<dbReference type="PDB" id="3FHI">
    <property type="method" value="X-ray"/>
    <property type="resolution" value="2.00 A"/>
    <property type="chains" value="B=92-245"/>
</dbReference>
<dbReference type="PDB" id="3IIA">
    <property type="method" value="X-ray"/>
    <property type="resolution" value="2.70 A"/>
    <property type="chains" value="A=92-245"/>
</dbReference>
<dbReference type="PDB" id="3IM3">
    <property type="method" value="X-ray"/>
    <property type="resolution" value="2.00 A"/>
    <property type="chains" value="A=13-62"/>
</dbReference>
<dbReference type="PDB" id="3IM4">
    <property type="method" value="X-ray"/>
    <property type="resolution" value="2.28 A"/>
    <property type="chains" value="A/B=13-62"/>
</dbReference>
<dbReference type="PDB" id="3PLQ">
    <property type="method" value="X-ray"/>
    <property type="resolution" value="2.30 A"/>
    <property type="chains" value="A=92-245"/>
</dbReference>
<dbReference type="PDB" id="3PNA">
    <property type="method" value="X-ray"/>
    <property type="resolution" value="1.50 A"/>
    <property type="chains" value="A/B=92-245"/>
</dbReference>
<dbReference type="PDB" id="3PVB">
    <property type="method" value="X-ray"/>
    <property type="resolution" value="3.30 A"/>
    <property type="chains" value="B=85-244"/>
</dbReference>
<dbReference type="PDB" id="4JV4">
    <property type="method" value="X-ray"/>
    <property type="resolution" value="2.95 A"/>
    <property type="chains" value="A=93-380"/>
</dbReference>
<dbReference type="PDB" id="4MX3">
    <property type="method" value="X-ray"/>
    <property type="resolution" value="3.88 A"/>
    <property type="chains" value="A/B=2-380"/>
</dbReference>
<dbReference type="PDB" id="4X6R">
    <property type="method" value="X-ray"/>
    <property type="resolution" value="2.40 A"/>
    <property type="chains" value="B=91-380"/>
</dbReference>
<dbReference type="PDB" id="5HVZ">
    <property type="method" value="X-ray"/>
    <property type="resolution" value="2.00 A"/>
    <property type="chains" value="A/B=13-62"/>
</dbReference>
<dbReference type="PDB" id="5JR7">
    <property type="method" value="X-ray"/>
    <property type="resolution" value="3.56 A"/>
    <property type="chains" value="B/D=92-366"/>
</dbReference>
<dbReference type="PDB" id="6BYR">
    <property type="method" value="X-ray"/>
    <property type="resolution" value="3.66 A"/>
    <property type="chains" value="B/D=2-380"/>
</dbReference>
<dbReference type="PDB" id="6BYS">
    <property type="method" value="X-ray"/>
    <property type="resolution" value="4.75 A"/>
    <property type="chains" value="B/D/F/H=2-380"/>
</dbReference>
<dbReference type="PDB" id="6NO7">
    <property type="method" value="X-ray"/>
    <property type="resolution" value="3.55 A"/>
    <property type="chains" value="B/D/F/H=1-380"/>
</dbReference>
<dbReference type="PDB" id="7LZ4">
    <property type="method" value="X-ray"/>
    <property type="resolution" value="4.16 A"/>
    <property type="chains" value="A/B/C/D/E/F/G/H=109-377"/>
</dbReference>
<dbReference type="PDBsum" id="1NE4"/>
<dbReference type="PDBsum" id="1NE6"/>
<dbReference type="PDBsum" id="1RGS"/>
<dbReference type="PDBsum" id="1RL3"/>
<dbReference type="PDBsum" id="2EZW"/>
<dbReference type="PDBsum" id="2QCS"/>
<dbReference type="PDBsum" id="3FHI"/>
<dbReference type="PDBsum" id="3IIA"/>
<dbReference type="PDBsum" id="3IM3"/>
<dbReference type="PDBsum" id="3IM4"/>
<dbReference type="PDBsum" id="3PLQ"/>
<dbReference type="PDBsum" id="3PNA"/>
<dbReference type="PDBsum" id="3PVB"/>
<dbReference type="PDBsum" id="4JV4"/>
<dbReference type="PDBsum" id="4MX3"/>
<dbReference type="PDBsum" id="4X6R"/>
<dbReference type="PDBsum" id="5HVZ"/>
<dbReference type="PDBsum" id="5JR7"/>
<dbReference type="PDBsum" id="6BYR"/>
<dbReference type="PDBsum" id="6BYS"/>
<dbReference type="PDBsum" id="6NO7"/>
<dbReference type="PDBsum" id="7LZ4"/>
<dbReference type="EMDB" id="EMD-50664"/>
<dbReference type="SMR" id="P00514"/>
<dbReference type="DIP" id="DIP-36644N"/>
<dbReference type="FunCoup" id="P00514">
    <property type="interactions" value="2703"/>
</dbReference>
<dbReference type="IntAct" id="P00514">
    <property type="interactions" value="3"/>
</dbReference>
<dbReference type="MINT" id="P00514"/>
<dbReference type="STRING" id="9913.ENSBTAP00000011371"/>
<dbReference type="BindingDB" id="P00514"/>
<dbReference type="iPTMnet" id="P00514"/>
<dbReference type="PaxDb" id="9913-ENSBTAP00000011371"/>
<dbReference type="Ensembl" id="ENSBTAT00000011371.6">
    <property type="protein sequence ID" value="ENSBTAP00000011371.5"/>
    <property type="gene ID" value="ENSBTAG00000008621.7"/>
</dbReference>
<dbReference type="GeneID" id="615074"/>
<dbReference type="KEGG" id="bta:615074"/>
<dbReference type="CTD" id="5573"/>
<dbReference type="VEuPathDB" id="HostDB:ENSBTAG00000008621"/>
<dbReference type="VGNC" id="VGNC:33324">
    <property type="gene designation" value="PRKAR1A"/>
</dbReference>
<dbReference type="eggNOG" id="KOG1113">
    <property type="taxonomic scope" value="Eukaryota"/>
</dbReference>
<dbReference type="GeneTree" id="ENSGT00940000155148"/>
<dbReference type="HOGENOM" id="CLU_018310_1_0_1"/>
<dbReference type="InParanoid" id="P00514"/>
<dbReference type="OMA" id="QIEYHIS"/>
<dbReference type="OrthoDB" id="417078at2759"/>
<dbReference type="TreeFam" id="TF314920"/>
<dbReference type="Reactome" id="R-BTA-163615">
    <property type="pathway name" value="PKA activation"/>
</dbReference>
<dbReference type="Reactome" id="R-BTA-164378">
    <property type="pathway name" value="PKA activation in glucagon signalling"/>
</dbReference>
<dbReference type="Reactome" id="R-BTA-180024">
    <property type="pathway name" value="DARPP-32 events"/>
</dbReference>
<dbReference type="Reactome" id="R-BTA-432040">
    <property type="pathway name" value="Vasopressin regulates renal water homeostasis via Aquaporins"/>
</dbReference>
<dbReference type="Reactome" id="R-BTA-442720">
    <property type="pathway name" value="CREB1 phosphorylation through the activation of Adenylate Cyclase"/>
</dbReference>
<dbReference type="Reactome" id="R-BTA-5610787">
    <property type="pathway name" value="Hedgehog 'off' state"/>
</dbReference>
<dbReference type="Reactome" id="R-BTA-9634597">
    <property type="pathway name" value="GPER1 signaling"/>
</dbReference>
<dbReference type="Reactome" id="R-BTA-983231">
    <property type="pathway name" value="Factors involved in megakaryocyte development and platelet production"/>
</dbReference>
<dbReference type="Reactome" id="R-BTA-9856530">
    <property type="pathway name" value="High laminar flow shear stress activates signaling by PIEZO1 and PECAM1:CDH5:KDR in endothelial cells"/>
</dbReference>
<dbReference type="EvolutionaryTrace" id="P00514"/>
<dbReference type="PRO" id="PR:P00514"/>
<dbReference type="Proteomes" id="UP000009136">
    <property type="component" value="Chromosome 19"/>
</dbReference>
<dbReference type="Bgee" id="ENSBTAG00000008621">
    <property type="expression patterns" value="Expressed in prefrontal cortex and 106 other cell types or tissues"/>
</dbReference>
<dbReference type="GO" id="GO:0005930">
    <property type="term" value="C:axoneme"/>
    <property type="evidence" value="ECO:0007669"/>
    <property type="project" value="Ensembl"/>
</dbReference>
<dbReference type="GO" id="GO:0005952">
    <property type="term" value="C:cAMP-dependent protein kinase complex"/>
    <property type="evidence" value="ECO:0000315"/>
    <property type="project" value="CAFA"/>
</dbReference>
<dbReference type="GO" id="GO:0005813">
    <property type="term" value="C:centrosome"/>
    <property type="evidence" value="ECO:0007669"/>
    <property type="project" value="Ensembl"/>
</dbReference>
<dbReference type="GO" id="GO:0005737">
    <property type="term" value="C:cytoplasm"/>
    <property type="evidence" value="ECO:0000314"/>
    <property type="project" value="CAFA"/>
</dbReference>
<dbReference type="GO" id="GO:0005829">
    <property type="term" value="C:cytosol"/>
    <property type="evidence" value="ECO:0000318"/>
    <property type="project" value="GO_Central"/>
</dbReference>
<dbReference type="GO" id="GO:0098978">
    <property type="term" value="C:glutamatergic synapse"/>
    <property type="evidence" value="ECO:0007669"/>
    <property type="project" value="Ensembl"/>
</dbReference>
<dbReference type="GO" id="GO:0001772">
    <property type="term" value="C:immunological synapse"/>
    <property type="evidence" value="ECO:0007669"/>
    <property type="project" value="Ensembl"/>
</dbReference>
<dbReference type="GO" id="GO:0005771">
    <property type="term" value="C:multivesicular body"/>
    <property type="evidence" value="ECO:0007669"/>
    <property type="project" value="Ensembl"/>
</dbReference>
<dbReference type="GO" id="GO:0031594">
    <property type="term" value="C:neuromuscular junction"/>
    <property type="evidence" value="ECO:0007669"/>
    <property type="project" value="Ensembl"/>
</dbReference>
<dbReference type="GO" id="GO:0031588">
    <property type="term" value="C:nucleotide-activated protein kinase complex"/>
    <property type="evidence" value="ECO:0007669"/>
    <property type="project" value="Ensembl"/>
</dbReference>
<dbReference type="GO" id="GO:0044853">
    <property type="term" value="C:plasma membrane raft"/>
    <property type="evidence" value="ECO:0007669"/>
    <property type="project" value="Ensembl"/>
</dbReference>
<dbReference type="GO" id="GO:0120212">
    <property type="term" value="C:sperm head-tail coupling apparatus"/>
    <property type="evidence" value="ECO:0007669"/>
    <property type="project" value="Ensembl"/>
</dbReference>
<dbReference type="GO" id="GO:0030552">
    <property type="term" value="F:cAMP binding"/>
    <property type="evidence" value="ECO:0000318"/>
    <property type="project" value="GO_Central"/>
</dbReference>
<dbReference type="GO" id="GO:0004862">
    <property type="term" value="F:cAMP-dependent protein kinase inhibitor activity"/>
    <property type="evidence" value="ECO:0000318"/>
    <property type="project" value="GO_Central"/>
</dbReference>
<dbReference type="GO" id="GO:0042802">
    <property type="term" value="F:identical protein binding"/>
    <property type="evidence" value="ECO:0000353"/>
    <property type="project" value="IntAct"/>
</dbReference>
<dbReference type="GO" id="GO:0019904">
    <property type="term" value="F:protein domain specific binding"/>
    <property type="evidence" value="ECO:0007669"/>
    <property type="project" value="Ensembl"/>
</dbReference>
<dbReference type="GO" id="GO:0034236">
    <property type="term" value="F:protein kinase A catalytic subunit binding"/>
    <property type="evidence" value="ECO:0000353"/>
    <property type="project" value="CAFA"/>
</dbReference>
<dbReference type="GO" id="GO:0031625">
    <property type="term" value="F:ubiquitin protein ligase binding"/>
    <property type="evidence" value="ECO:0007669"/>
    <property type="project" value="Ensembl"/>
</dbReference>
<dbReference type="GO" id="GO:0007189">
    <property type="term" value="P:adenylate cyclase-activating G protein-coupled receptor signaling pathway"/>
    <property type="evidence" value="ECO:0000318"/>
    <property type="project" value="GO_Central"/>
</dbReference>
<dbReference type="GO" id="GO:0060038">
    <property type="term" value="P:cardiac muscle cell proliferation"/>
    <property type="evidence" value="ECO:0007669"/>
    <property type="project" value="Ensembl"/>
</dbReference>
<dbReference type="GO" id="GO:0071377">
    <property type="term" value="P:cellular response to glucagon stimulus"/>
    <property type="evidence" value="ECO:0007669"/>
    <property type="project" value="Ensembl"/>
</dbReference>
<dbReference type="GO" id="GO:0001707">
    <property type="term" value="P:mesoderm formation"/>
    <property type="evidence" value="ECO:0007669"/>
    <property type="project" value="Ensembl"/>
</dbReference>
<dbReference type="GO" id="GO:0046007">
    <property type="term" value="P:negative regulation of activated T cell proliferation"/>
    <property type="evidence" value="ECO:0007669"/>
    <property type="project" value="Ensembl"/>
</dbReference>
<dbReference type="GO" id="GO:0141162">
    <property type="term" value="P:negative regulation of cAMP/PKA signal transduction"/>
    <property type="evidence" value="ECO:0007669"/>
    <property type="project" value="Ensembl"/>
</dbReference>
<dbReference type="GO" id="GO:0010629">
    <property type="term" value="P:negative regulation of gene expression"/>
    <property type="evidence" value="ECO:0007669"/>
    <property type="project" value="Ensembl"/>
</dbReference>
<dbReference type="GO" id="GO:0032024">
    <property type="term" value="P:positive regulation of insulin secretion"/>
    <property type="evidence" value="ECO:0007669"/>
    <property type="project" value="Ensembl"/>
</dbReference>
<dbReference type="GO" id="GO:0045214">
    <property type="term" value="P:sarcomere organization"/>
    <property type="evidence" value="ECO:0007669"/>
    <property type="project" value="Ensembl"/>
</dbReference>
<dbReference type="CDD" id="cd00038">
    <property type="entry name" value="CAP_ED"/>
    <property type="match status" value="2"/>
</dbReference>
<dbReference type="CDD" id="cd12101">
    <property type="entry name" value="DD_RIalpha_PKA"/>
    <property type="match status" value="1"/>
</dbReference>
<dbReference type="DisProt" id="DP00245"/>
<dbReference type="FunFam" id="2.60.120.10:FF:000013">
    <property type="entry name" value="cAMP-dependent protein kinase type I regulatory subunit"/>
    <property type="match status" value="1"/>
</dbReference>
<dbReference type="FunFam" id="1.20.890.10:FF:000001">
    <property type="entry name" value="cAMP-dependent protein kinase type I-alpha regulatory subunit"/>
    <property type="match status" value="1"/>
</dbReference>
<dbReference type="FunFam" id="2.60.120.10:FF:000006">
    <property type="entry name" value="cAMP-dependent protein kinase type I-alpha regulatory subunit"/>
    <property type="match status" value="1"/>
</dbReference>
<dbReference type="Gene3D" id="1.20.890.10">
    <property type="entry name" value="cAMP-dependent protein kinase regulatory subunit, dimerization-anchoring domain"/>
    <property type="match status" value="1"/>
</dbReference>
<dbReference type="Gene3D" id="2.60.120.10">
    <property type="entry name" value="Jelly Rolls"/>
    <property type="match status" value="2"/>
</dbReference>
<dbReference type="InterPro" id="IPR050503">
    <property type="entry name" value="cAMP-dep_PK_reg_su-like"/>
</dbReference>
<dbReference type="InterPro" id="IPR012198">
    <property type="entry name" value="cAMP_dep_PK_reg_su"/>
</dbReference>
<dbReference type="InterPro" id="IPR003117">
    <property type="entry name" value="cAMP_dep_PK_reg_su_I/II_a/b"/>
</dbReference>
<dbReference type="InterPro" id="IPR018488">
    <property type="entry name" value="cNMP-bd_CS"/>
</dbReference>
<dbReference type="InterPro" id="IPR000595">
    <property type="entry name" value="cNMP-bd_dom"/>
</dbReference>
<dbReference type="InterPro" id="IPR018490">
    <property type="entry name" value="cNMP-bd_dom_sf"/>
</dbReference>
<dbReference type="InterPro" id="IPR014710">
    <property type="entry name" value="RmlC-like_jellyroll"/>
</dbReference>
<dbReference type="PANTHER" id="PTHR11635">
    <property type="entry name" value="CAMP-DEPENDENT PROTEIN KINASE REGULATORY CHAIN"/>
    <property type="match status" value="1"/>
</dbReference>
<dbReference type="PANTHER" id="PTHR11635:SF129">
    <property type="entry name" value="CAMP-DEPENDENT PROTEIN KINASE TYPE I-ALPHA REGULATORY SUBUNIT"/>
    <property type="match status" value="1"/>
</dbReference>
<dbReference type="Pfam" id="PF00027">
    <property type="entry name" value="cNMP_binding"/>
    <property type="match status" value="2"/>
</dbReference>
<dbReference type="Pfam" id="PF02197">
    <property type="entry name" value="RIIa"/>
    <property type="match status" value="1"/>
</dbReference>
<dbReference type="PIRSF" id="PIRSF000548">
    <property type="entry name" value="PK_regulatory"/>
    <property type="match status" value="1"/>
</dbReference>
<dbReference type="PRINTS" id="PR00103">
    <property type="entry name" value="CAMPKINASE"/>
</dbReference>
<dbReference type="SMART" id="SM00100">
    <property type="entry name" value="cNMP"/>
    <property type="match status" value="2"/>
</dbReference>
<dbReference type="SMART" id="SM00394">
    <property type="entry name" value="RIIa"/>
    <property type="match status" value="1"/>
</dbReference>
<dbReference type="SUPFAM" id="SSF51206">
    <property type="entry name" value="cAMP-binding domain-like"/>
    <property type="match status" value="2"/>
</dbReference>
<dbReference type="SUPFAM" id="SSF47391">
    <property type="entry name" value="Dimerization-anchoring domain of cAMP-dependent PK regulatory subunit"/>
    <property type="match status" value="1"/>
</dbReference>
<dbReference type="PROSITE" id="PS00888">
    <property type="entry name" value="CNMP_BINDING_1"/>
    <property type="match status" value="2"/>
</dbReference>
<dbReference type="PROSITE" id="PS00889">
    <property type="entry name" value="CNMP_BINDING_2"/>
    <property type="match status" value="2"/>
</dbReference>
<dbReference type="PROSITE" id="PS50042">
    <property type="entry name" value="CNMP_BINDING_3"/>
    <property type="match status" value="2"/>
</dbReference>
<gene>
    <name type="primary">PRKAR1A</name>
</gene>
<organism>
    <name type="scientific">Bos taurus</name>
    <name type="common">Bovine</name>
    <dbReference type="NCBI Taxonomy" id="9913"/>
    <lineage>
        <taxon>Eukaryota</taxon>
        <taxon>Metazoa</taxon>
        <taxon>Chordata</taxon>
        <taxon>Craniata</taxon>
        <taxon>Vertebrata</taxon>
        <taxon>Euteleostomi</taxon>
        <taxon>Mammalia</taxon>
        <taxon>Eutheria</taxon>
        <taxon>Laurasiatheria</taxon>
        <taxon>Artiodactyla</taxon>
        <taxon>Ruminantia</taxon>
        <taxon>Pecora</taxon>
        <taxon>Bovidae</taxon>
        <taxon>Bovinae</taxon>
        <taxon>Bos</taxon>
    </lineage>
</organism>
<sequence>MASGTTASEEERSLRECELYVQKHNIQALLKDSIVQLCTARPERPMAFLREYFEKLEKEEAKQIQNLQKAGSRADSREDEISPPPPNPVVKGRRRRGAISAEVYTEEDAASYVRKVIPKDYKTMAALAKAIEKNVLFSHLDDNERSDIFDAMFPVSFIAGETVIQQGDEGDNFYVIDQGEMDVYVNNEWATSVGEGGSFGELALIYGTPRAATVKAKTNVKLWGIDRDSYRRILMGSTLRKRKMYEEFLSKVSILESLDKWERLTVADALEPVQFEDGQKIVVQGEPGDEFFIILEGSAAVLQRRSENEEFVEVGRLGPSDYFGEIALLMNRPRAATVVARGPLKCVKLDRPRFERVLGPCSDILKRNIQQYNSFVSLSV</sequence>
<protein>
    <recommendedName>
        <fullName>cAMP-dependent protein kinase type I-alpha regulatory subunit</fullName>
    </recommendedName>
    <component>
        <recommendedName>
            <fullName>cAMP-dependent protein kinase type I-alpha regulatory subunit, N-terminally processed</fullName>
        </recommendedName>
    </component>
</protein>
<name>KAP0_BOVIN</name>
<reference key="1">
    <citation type="journal article" date="2005" name="BMC Genomics">
        <title>Characterization of 954 bovine full-CDS cDNA sequences.</title>
        <authorList>
            <person name="Harhay G.P."/>
            <person name="Sonstegard T.S."/>
            <person name="Keele J.W."/>
            <person name="Heaton M.P."/>
            <person name="Clawson M.L."/>
            <person name="Snelling W.M."/>
            <person name="Wiedmann R.T."/>
            <person name="Van Tassell C.P."/>
            <person name="Smith T.P.L."/>
        </authorList>
    </citation>
    <scope>NUCLEOTIDE SEQUENCE [LARGE SCALE MRNA]</scope>
</reference>
<reference key="2">
    <citation type="submission" date="2006-06" db="EMBL/GenBank/DDBJ databases">
        <authorList>
            <consortium name="NIH - Mammalian Gene Collection (MGC) project"/>
        </authorList>
    </citation>
    <scope>NUCLEOTIDE SEQUENCE [LARGE SCALE MRNA]</scope>
    <source>
        <strain>Hereford</strain>
        <tissue>Basal ganglia</tissue>
    </source>
</reference>
<reference key="3">
    <citation type="journal article" date="1984" name="Biochemistry">
        <title>Amino acid sequence of the regulatory subunit of bovine type I adenosine cyclic 3',5'-phosphate dependent protein kinase.</title>
        <authorList>
            <person name="Titani K."/>
            <person name="Sasagawa T."/>
            <person name="Ericsson L.H."/>
            <person name="Kumar S."/>
            <person name="Smith S.B."/>
            <person name="Krebs E.G."/>
            <person name="Walsh K.A."/>
        </authorList>
    </citation>
    <scope>PROTEIN SEQUENCE OF 2-380</scope>
    <scope>ACETYLATION AT ALA-2</scope>
</reference>
<reference key="4">
    <citation type="journal article" date="1983" name="Proc. Natl. Acad. Sci. U.S.A.">
        <title>Isolation of a cDNA clone for the type I regulatory subunit of bovine cAMP-dependent protein kinase.</title>
        <authorList>
            <person name="Lee D.C."/>
            <person name="Carmichael D.F."/>
            <person name="Krebs E.G."/>
            <person name="McKnight G.S."/>
        </authorList>
    </citation>
    <scope>NUCLEOTIDE SEQUENCE [MRNA] OF 214-232</scope>
</reference>
<reference key="5">
    <citation type="journal article" date="1987" name="Biochemistry">
        <title>Predicted structures of cAMP binding domains of type I and II regulatory subunits of cAMP-dependent protein kinase.</title>
        <authorList>
            <person name="Weber I.T."/>
            <person name="Steitz T.A."/>
            <person name="Bubis J."/>
            <person name="Taylor S.S."/>
        </authorList>
    </citation>
    <scope>3D-STRUCTURE MODELING</scope>
</reference>
<reference key="6">
    <citation type="journal article" date="1995" name="Science">
        <title>Regulatory subunit of protein kinase A: structure of deletion mutant with cAMP binding domains.</title>
        <authorList>
            <person name="Su Y."/>
            <person name="Dostmann W.R."/>
            <person name="Herberg F.W."/>
            <person name="Durick K."/>
            <person name="Xuong N.H."/>
            <person name="ten Eyck L."/>
            <person name="Taylor S.S."/>
            <person name="Varughese K.I."/>
        </authorList>
    </citation>
    <scope>X-RAY CRYSTALLOGRAPHY (2.8 ANGSTROMS) OF 114-380</scope>
</reference>
<reference key="7">
    <citation type="journal article" date="1987" name="J. Biol. Chem.">
        <title>Antiparallel alignment of the two protomers of the regulatory subunit dimer of cAMP-dependent protein kinase I.</title>
        <authorList>
            <person name="Bubis J."/>
            <person name="Vedvick T.S."/>
            <person name="Taylor S.S."/>
        </authorList>
    </citation>
    <scope>DISULFIDE BONDS</scope>
</reference>
<evidence type="ECO:0000250" key="1"/>
<evidence type="ECO:0000250" key="2">
    <source>
        <dbReference type="UniProtKB" id="P09456"/>
    </source>
</evidence>
<evidence type="ECO:0000250" key="3">
    <source>
        <dbReference type="UniProtKB" id="P10644"/>
    </source>
</evidence>
<evidence type="ECO:0000250" key="4">
    <source>
        <dbReference type="UniProtKB" id="Q9DBC7"/>
    </source>
</evidence>
<evidence type="ECO:0000256" key="5">
    <source>
        <dbReference type="SAM" id="MobiDB-lite"/>
    </source>
</evidence>
<evidence type="ECO:0000269" key="6">
    <source>
    </source>
</evidence>
<evidence type="ECO:0000269" key="7">
    <source>
    </source>
</evidence>
<evidence type="ECO:0000305" key="8"/>
<evidence type="ECO:0007829" key="9">
    <source>
        <dbReference type="PDB" id="1NE4"/>
    </source>
</evidence>
<evidence type="ECO:0007829" key="10">
    <source>
        <dbReference type="PDB" id="1RGS"/>
    </source>
</evidence>
<evidence type="ECO:0007829" key="11">
    <source>
        <dbReference type="PDB" id="1RL3"/>
    </source>
</evidence>
<evidence type="ECO:0007829" key="12">
    <source>
        <dbReference type="PDB" id="2QCS"/>
    </source>
</evidence>
<evidence type="ECO:0007829" key="13">
    <source>
        <dbReference type="PDB" id="3FHI"/>
    </source>
</evidence>
<evidence type="ECO:0007829" key="14">
    <source>
        <dbReference type="PDB" id="3IIA"/>
    </source>
</evidence>
<evidence type="ECO:0007829" key="15">
    <source>
        <dbReference type="PDB" id="3IM3"/>
    </source>
</evidence>
<evidence type="ECO:0007829" key="16">
    <source>
        <dbReference type="PDB" id="3PNA"/>
    </source>
</evidence>
<accession>P00514</accession>
<accession>A5D9F4</accession>
<accession>Q17QP8</accession>
<keyword id="KW-0002">3D-structure</keyword>
<keyword id="KW-0007">Acetylation</keyword>
<keyword id="KW-0114">cAMP</keyword>
<keyword id="KW-0116">cAMP-binding</keyword>
<keyword id="KW-1003">Cell membrane</keyword>
<keyword id="KW-0903">Direct protein sequencing</keyword>
<keyword id="KW-1015">Disulfide bond</keyword>
<keyword id="KW-0472">Membrane</keyword>
<keyword id="KW-0547">Nucleotide-binding</keyword>
<keyword id="KW-0597">Phosphoprotein</keyword>
<keyword id="KW-1185">Reference proteome</keyword>
<keyword id="KW-0677">Repeat</keyword>
<comment type="function">
    <text>Regulatory subunit of the cAMP-dependent protein kinases involved in cAMP signaling in cells.</text>
</comment>
<comment type="subunit">
    <text evidence="1 3">The inactive holoenzyme is composed of two regulatory chains and two catalytic chains. Activation by cAMP releases the two active catalytic monomers and the regulatory dimer. Interacts with PRKACA and PRKACB (By similarity). PRKAR1A also interacts with RFC2; the complex may be involved in cell survival. Interacts with AKAP4. Interacts with RARA; the interaction occurs in the presence of cAMP or FSH and regulates RARA transcriptional activity. Interacts with the phosphorylated form of PJA2. Interacts with CBFA2T3. Interacts with PRKX; regulates this cAMP-dependent protein kinase (By similarity). Interacts with smAKAP; this interaction may target PRKAR1A to the plasma membrane. Interacts with AICDA (By similarity).</text>
</comment>
<comment type="interaction">
    <interactant intactId="EBI-1041635">
        <id>P00514</id>
    </interactant>
    <interactant intactId="EBI-1041635">
        <id>P00514</id>
        <label>PRKAR1A</label>
    </interactant>
    <organismsDiffer>false</organismsDiffer>
    <experiments>5</experiments>
</comment>
<comment type="interaction">
    <interactant intactId="EBI-1041635">
        <id>P00514</id>
    </interactant>
    <interactant intactId="EBI-752153">
        <id>O43572</id>
        <label>AKAP10</label>
    </interactant>
    <organismsDiffer>true</organismsDiffer>
    <experiments>2</experiments>
</comment>
<comment type="interaction">
    <interactant intactId="EBI-1041635">
        <id>P00514</id>
    </interactant>
    <interactant intactId="EBI-400564">
        <id>P05132</id>
        <label>Prkaca</label>
    </interactant>
    <organismsDiffer>true</organismsDiffer>
    <experiments>6</experiments>
</comment>
<comment type="subcellular location">
    <subcellularLocation>
        <location evidence="1">Cell membrane</location>
    </subcellularLocation>
</comment>
<comment type="tissue specificity">
    <text>Four types of regulatory chains are found: I-alpha, I-beta, II-alpha, and II-beta. Their expression varies among tissues and is in some cases constitutive and in others inducible.</text>
</comment>
<comment type="PTM">
    <text>The pseudophosphorylation site binds to the substrate-binding region of the catalytic chain, resulting in the inhibition of its activity. The physiological significance of the in vitro phosphorylation of a proximal serine is unclear.</text>
</comment>
<comment type="similarity">
    <text evidence="8">Belongs to the cAMP-dependent kinase regulatory chain family.</text>
</comment>
<feature type="chain" id="PRO_0000423216" description="cAMP-dependent protein kinase type I-alpha regulatory subunit">
    <location>
        <begin position="1"/>
        <end position="380"/>
    </location>
</feature>
<feature type="initiator methionine" description="Removed; alternate" evidence="7">
    <location>
        <position position="1"/>
    </location>
</feature>
<feature type="chain" id="PRO_0000205376" description="cAMP-dependent protein kinase type I-alpha regulatory subunit, N-terminally processed">
    <location>
        <begin position="2"/>
        <end position="380"/>
    </location>
</feature>
<feature type="region of interest" description="Dimerization and phosphorylation">
    <location>
        <begin position="2"/>
        <end position="135"/>
    </location>
</feature>
<feature type="region of interest" description="Disordered" evidence="5">
    <location>
        <begin position="64"/>
        <end position="96"/>
    </location>
</feature>
<feature type="short sequence motif" description="Pseudophosphorylation motif">
    <location>
        <begin position="95"/>
        <end position="99"/>
    </location>
</feature>
<feature type="binding site">
    <location>
        <begin position="136"/>
        <end position="253"/>
    </location>
    <ligand>
        <name>3',5'-cyclic AMP</name>
        <dbReference type="ChEBI" id="CHEBI:58165"/>
        <label>1</label>
    </ligand>
</feature>
<feature type="binding site">
    <location>
        <position position="201"/>
    </location>
    <ligand>
        <name>3',5'-cyclic AMP</name>
        <dbReference type="ChEBI" id="CHEBI:58165"/>
        <label>1</label>
    </ligand>
</feature>
<feature type="binding site">
    <location>
        <position position="210"/>
    </location>
    <ligand>
        <name>3',5'-cyclic AMP</name>
        <dbReference type="ChEBI" id="CHEBI:58165"/>
        <label>1</label>
    </ligand>
</feature>
<feature type="binding site">
    <location>
        <begin position="254"/>
        <end position="380"/>
    </location>
    <ligand>
        <name>3',5'-cyclic AMP</name>
        <dbReference type="ChEBI" id="CHEBI:58165"/>
        <label>2</label>
    </ligand>
</feature>
<feature type="binding site">
    <location>
        <position position="325"/>
    </location>
    <ligand>
        <name>3',5'-cyclic AMP</name>
        <dbReference type="ChEBI" id="CHEBI:58165"/>
        <label>2</label>
    </ligand>
</feature>
<feature type="binding site">
    <location>
        <position position="334"/>
    </location>
    <ligand>
        <name>3',5'-cyclic AMP</name>
        <dbReference type="ChEBI" id="CHEBI:58165"/>
        <label>2</label>
    </ligand>
</feature>
<feature type="modified residue" description="N-acetylmethionine" evidence="3">
    <location>
        <position position="1"/>
    </location>
</feature>
<feature type="modified residue" description="N-acetylalanine; in cAMP-dependent protein kinase type I-alpha regulatory subunit, N-terminally processed" evidence="7">
    <location>
        <position position="2"/>
    </location>
</feature>
<feature type="modified residue" description="Phosphoserine" evidence="2">
    <location>
        <position position="3"/>
    </location>
</feature>
<feature type="modified residue" description="Phosphoserine" evidence="3">
    <location>
        <position position="76"/>
    </location>
</feature>
<feature type="modified residue" description="Phosphoserine" evidence="3">
    <location>
        <position position="82"/>
    </location>
</feature>
<feature type="modified residue" description="Phosphoserine" evidence="4">
    <location>
        <position position="100"/>
    </location>
</feature>
<feature type="modified residue" description="Phosphoserine" evidence="2">
    <location>
        <position position="257"/>
    </location>
</feature>
<feature type="disulfide bond" description="Interchain (with C-37)" evidence="6">
    <location>
        <position position="17"/>
    </location>
</feature>
<feature type="disulfide bond" description="Interchain (with C-16)" evidence="6">
    <location>
        <position position="38"/>
    </location>
</feature>
<feature type="sequence conflict" description="In Ref. 4; AAA30708." evidence="8" ref="4">
    <original>Y</original>
    <variation>N</variation>
    <location>
        <position position="230"/>
    </location>
</feature>
<feature type="helix" evidence="15">
    <location>
        <begin position="14"/>
        <end position="23"/>
    </location>
</feature>
<feature type="helix" evidence="15">
    <location>
        <begin position="26"/>
        <end position="40"/>
    </location>
</feature>
<feature type="helix" evidence="15">
    <location>
        <begin position="45"/>
        <end position="61"/>
    </location>
</feature>
<feature type="helix" evidence="13">
    <location>
        <begin position="106"/>
        <end position="109"/>
    </location>
</feature>
<feature type="helix" evidence="16">
    <location>
        <begin position="121"/>
        <end position="133"/>
    </location>
</feature>
<feature type="helix" evidence="16">
    <location>
        <begin position="135"/>
        <end position="137"/>
    </location>
</feature>
<feature type="strand" evidence="14">
    <location>
        <begin position="138"/>
        <end position="140"/>
    </location>
</feature>
<feature type="helix" evidence="16">
    <location>
        <begin position="142"/>
        <end position="151"/>
    </location>
</feature>
<feature type="strand" evidence="16">
    <location>
        <begin position="153"/>
        <end position="157"/>
    </location>
</feature>
<feature type="strand" evidence="16">
    <location>
        <begin position="162"/>
        <end position="164"/>
    </location>
</feature>
<feature type="strand" evidence="16">
    <location>
        <begin position="172"/>
        <end position="179"/>
    </location>
</feature>
<feature type="strand" evidence="16">
    <location>
        <begin position="181"/>
        <end position="185"/>
    </location>
</feature>
<feature type="strand" evidence="16">
    <location>
        <begin position="188"/>
        <end position="193"/>
    </location>
</feature>
<feature type="helix" evidence="16">
    <location>
        <begin position="202"/>
        <end position="206"/>
    </location>
</feature>
<feature type="strand" evidence="16">
    <location>
        <begin position="211"/>
        <end position="218"/>
    </location>
</feature>
<feature type="strand" evidence="16">
    <location>
        <begin position="220"/>
        <end position="226"/>
    </location>
</feature>
<feature type="helix" evidence="16">
    <location>
        <begin position="227"/>
        <end position="233"/>
    </location>
</feature>
<feature type="helix" evidence="16">
    <location>
        <begin position="235"/>
        <end position="240"/>
    </location>
</feature>
<feature type="helix" evidence="11">
    <location>
        <begin position="246"/>
        <end position="250"/>
    </location>
</feature>
<feature type="helix" evidence="12">
    <location>
        <begin position="253"/>
        <end position="255"/>
    </location>
</feature>
<feature type="helix" evidence="12">
    <location>
        <begin position="260"/>
        <end position="269"/>
    </location>
</feature>
<feature type="strand" evidence="12">
    <location>
        <begin position="271"/>
        <end position="275"/>
    </location>
</feature>
<feature type="strand" evidence="11">
    <location>
        <begin position="277"/>
        <end position="279"/>
    </location>
</feature>
<feature type="strand" evidence="12">
    <location>
        <begin position="280"/>
        <end position="282"/>
    </location>
</feature>
<feature type="strand" evidence="9">
    <location>
        <begin position="284"/>
        <end position="286"/>
    </location>
</feature>
<feature type="strand" evidence="12">
    <location>
        <begin position="290"/>
        <end position="304"/>
    </location>
</feature>
<feature type="strand" evidence="9">
    <location>
        <begin position="305"/>
        <end position="309"/>
    </location>
</feature>
<feature type="strand" evidence="12">
    <location>
        <begin position="311"/>
        <end position="317"/>
    </location>
</feature>
<feature type="strand" evidence="10">
    <location>
        <begin position="322"/>
        <end position="324"/>
    </location>
</feature>
<feature type="helix" evidence="12">
    <location>
        <begin position="326"/>
        <end position="328"/>
    </location>
</feature>
<feature type="strand" evidence="12">
    <location>
        <begin position="335"/>
        <end position="350"/>
    </location>
</feature>
<feature type="helix" evidence="12">
    <location>
        <begin position="351"/>
        <end position="358"/>
    </location>
</feature>
<feature type="helix" evidence="12">
    <location>
        <begin position="361"/>
        <end position="365"/>
    </location>
</feature>
<feature type="helix" evidence="12">
    <location>
        <begin position="369"/>
        <end position="375"/>
    </location>
</feature>
<proteinExistence type="evidence at protein level"/>